<organism>
    <name type="scientific">Streptococcus pyogenes serotype M12 (strain MGAS9429)</name>
    <dbReference type="NCBI Taxonomy" id="370551"/>
    <lineage>
        <taxon>Bacteria</taxon>
        <taxon>Bacillati</taxon>
        <taxon>Bacillota</taxon>
        <taxon>Bacilli</taxon>
        <taxon>Lactobacillales</taxon>
        <taxon>Streptococcaceae</taxon>
        <taxon>Streptococcus</taxon>
    </lineage>
</organism>
<accession>Q1JMY5</accession>
<reference key="1">
    <citation type="journal article" date="2006" name="Proc. Natl. Acad. Sci. U.S.A.">
        <title>Molecular genetic anatomy of inter- and intraserotype variation in the human bacterial pathogen group A Streptococcus.</title>
        <authorList>
            <person name="Beres S.B."/>
            <person name="Richter E.W."/>
            <person name="Nagiec M.J."/>
            <person name="Sumby P."/>
            <person name="Porcella S.F."/>
            <person name="DeLeo F.R."/>
            <person name="Musser J.M."/>
        </authorList>
    </citation>
    <scope>NUCLEOTIDE SEQUENCE [LARGE SCALE GENOMIC DNA]</scope>
    <source>
        <strain>MGAS9429</strain>
    </source>
</reference>
<evidence type="ECO:0000255" key="1">
    <source>
        <dbReference type="HAMAP-Rule" id="MF_00184"/>
    </source>
</evidence>
<evidence type="ECO:0000255" key="2">
    <source>
        <dbReference type="PROSITE-ProRule" id="PRU01228"/>
    </source>
</evidence>
<keyword id="KW-0030">Aminoacyl-tRNA synthetase</keyword>
<keyword id="KW-0067">ATP-binding</keyword>
<keyword id="KW-0963">Cytoplasm</keyword>
<keyword id="KW-0436">Ligase</keyword>
<keyword id="KW-0479">Metal-binding</keyword>
<keyword id="KW-0547">Nucleotide-binding</keyword>
<keyword id="KW-0648">Protein biosynthesis</keyword>
<keyword id="KW-0694">RNA-binding</keyword>
<keyword id="KW-0820">tRNA-binding</keyword>
<keyword id="KW-0862">Zinc</keyword>
<protein>
    <recommendedName>
        <fullName evidence="1">Threonine--tRNA ligase</fullName>
        <ecNumber evidence="1">6.1.1.3</ecNumber>
    </recommendedName>
    <alternativeName>
        <fullName evidence="1">Threonyl-tRNA synthetase</fullName>
        <shortName evidence="1">ThrRS</shortName>
    </alternativeName>
</protein>
<proteinExistence type="inferred from homology"/>
<sequence>MIKITFPDGAVREFESGVTTFDIAESISKSLAKKALAGKFNDQLIDTTRAIEEDGSIEIVTPDHKDAYEVLRHSAAHLFAQAAKRLFPNLHLGVGPAIAEGFYYDTDNAEGQISNEDLPRIEAEMQKIVTENYPCIREEVTKEEALELFKDDPYKVELINEHAGAGLTVYRQGEFVDLCRGPHVPSTGRIQVFHLLNVAGAYWRGNSDNNMMQRIYGTAWFDKKDLKAYLTRLEEAKERDHRKLGKELDLFMISQEVGQGLPFWLPDGATIRRTLERYITDKELASGYQHVYTPPLASVELYKTSGHWDHYQEDMFPVMDMGDGEEFVLRPMNCPHHIQVYKNHVRSYRELPIRIAELGMMHRYEKSGALSGLQRVREMTLNDGHIFVTPEQIQEEFQRALQLIIDVYADFNLTDYRFRLSYRDPNDTHKYYDNDEMWENAQSMLKAALDEMGVDYFEAEGEAAFYGPKLDIQVKTALGNEETLSTIQLDFLLPERFDLKYIGADGEEHRPVMIHRGVISTMERFTAILIETYKGAFPTWLAPHQVTVIPISNEAHIDYAWEVAKTLRDRGVRADVDDRNEKMQYKIRASQTSKIPYQLIVGDKEMEDKSVNVRRYGSKATHTESVEEFVENILADIARKSRPDAQA</sequence>
<comment type="function">
    <text evidence="1">Catalyzes the attachment of threonine to tRNA(Thr) in a two-step reaction: L-threonine is first activated by ATP to form Thr-AMP and then transferred to the acceptor end of tRNA(Thr). Also edits incorrectly charged L-seryl-tRNA(Thr).</text>
</comment>
<comment type="catalytic activity">
    <reaction evidence="1">
        <text>tRNA(Thr) + L-threonine + ATP = L-threonyl-tRNA(Thr) + AMP + diphosphate + H(+)</text>
        <dbReference type="Rhea" id="RHEA:24624"/>
        <dbReference type="Rhea" id="RHEA-COMP:9670"/>
        <dbReference type="Rhea" id="RHEA-COMP:9704"/>
        <dbReference type="ChEBI" id="CHEBI:15378"/>
        <dbReference type="ChEBI" id="CHEBI:30616"/>
        <dbReference type="ChEBI" id="CHEBI:33019"/>
        <dbReference type="ChEBI" id="CHEBI:57926"/>
        <dbReference type="ChEBI" id="CHEBI:78442"/>
        <dbReference type="ChEBI" id="CHEBI:78534"/>
        <dbReference type="ChEBI" id="CHEBI:456215"/>
        <dbReference type="EC" id="6.1.1.3"/>
    </reaction>
</comment>
<comment type="cofactor">
    <cofactor evidence="1">
        <name>Zn(2+)</name>
        <dbReference type="ChEBI" id="CHEBI:29105"/>
    </cofactor>
    <text evidence="1">Binds 1 zinc ion per subunit.</text>
</comment>
<comment type="subunit">
    <text evidence="1">Homodimer.</text>
</comment>
<comment type="subcellular location">
    <subcellularLocation>
        <location evidence="1">Cytoplasm</location>
    </subcellularLocation>
</comment>
<comment type="similarity">
    <text evidence="1">Belongs to the class-II aminoacyl-tRNA synthetase family.</text>
</comment>
<dbReference type="EC" id="6.1.1.3" evidence="1"/>
<dbReference type="EMBL" id="CP000259">
    <property type="protein sequence ID" value="ABF31614.1"/>
    <property type="molecule type" value="Genomic_DNA"/>
</dbReference>
<dbReference type="RefSeq" id="WP_002985672.1">
    <property type="nucleotide sequence ID" value="NC_008021.1"/>
</dbReference>
<dbReference type="SMR" id="Q1JMY5"/>
<dbReference type="KEGG" id="spk:MGAS9429_Spy0426"/>
<dbReference type="HOGENOM" id="CLU_008554_0_1_9"/>
<dbReference type="Proteomes" id="UP000002433">
    <property type="component" value="Chromosome"/>
</dbReference>
<dbReference type="GO" id="GO:0005737">
    <property type="term" value="C:cytoplasm"/>
    <property type="evidence" value="ECO:0007669"/>
    <property type="project" value="UniProtKB-SubCell"/>
</dbReference>
<dbReference type="GO" id="GO:0005524">
    <property type="term" value="F:ATP binding"/>
    <property type="evidence" value="ECO:0007669"/>
    <property type="project" value="UniProtKB-UniRule"/>
</dbReference>
<dbReference type="GO" id="GO:0140096">
    <property type="term" value="F:catalytic activity, acting on a protein"/>
    <property type="evidence" value="ECO:0007669"/>
    <property type="project" value="UniProtKB-ARBA"/>
</dbReference>
<dbReference type="GO" id="GO:0046872">
    <property type="term" value="F:metal ion binding"/>
    <property type="evidence" value="ECO:0007669"/>
    <property type="project" value="UniProtKB-KW"/>
</dbReference>
<dbReference type="GO" id="GO:0004829">
    <property type="term" value="F:threonine-tRNA ligase activity"/>
    <property type="evidence" value="ECO:0007669"/>
    <property type="project" value="UniProtKB-UniRule"/>
</dbReference>
<dbReference type="GO" id="GO:0016740">
    <property type="term" value="F:transferase activity"/>
    <property type="evidence" value="ECO:0007669"/>
    <property type="project" value="UniProtKB-ARBA"/>
</dbReference>
<dbReference type="GO" id="GO:0000049">
    <property type="term" value="F:tRNA binding"/>
    <property type="evidence" value="ECO:0007669"/>
    <property type="project" value="UniProtKB-KW"/>
</dbReference>
<dbReference type="GO" id="GO:0006435">
    <property type="term" value="P:threonyl-tRNA aminoacylation"/>
    <property type="evidence" value="ECO:0007669"/>
    <property type="project" value="UniProtKB-UniRule"/>
</dbReference>
<dbReference type="CDD" id="cd01667">
    <property type="entry name" value="TGS_ThrRS"/>
    <property type="match status" value="1"/>
</dbReference>
<dbReference type="CDD" id="cd00860">
    <property type="entry name" value="ThrRS_anticodon"/>
    <property type="match status" value="1"/>
</dbReference>
<dbReference type="CDD" id="cd00771">
    <property type="entry name" value="ThrRS_core"/>
    <property type="match status" value="1"/>
</dbReference>
<dbReference type="FunFam" id="3.10.20.30:FF:000005">
    <property type="entry name" value="Threonine--tRNA ligase"/>
    <property type="match status" value="1"/>
</dbReference>
<dbReference type="FunFam" id="3.30.54.20:FF:000002">
    <property type="entry name" value="Threonine--tRNA ligase"/>
    <property type="match status" value="1"/>
</dbReference>
<dbReference type="FunFam" id="3.30.930.10:FF:000002">
    <property type="entry name" value="Threonine--tRNA ligase"/>
    <property type="match status" value="1"/>
</dbReference>
<dbReference type="FunFam" id="3.40.50.800:FF:000001">
    <property type="entry name" value="Threonine--tRNA ligase"/>
    <property type="match status" value="1"/>
</dbReference>
<dbReference type="FunFam" id="3.30.980.10:FF:000005">
    <property type="entry name" value="Threonyl-tRNA synthetase, mitochondrial"/>
    <property type="match status" value="1"/>
</dbReference>
<dbReference type="Gene3D" id="3.10.20.30">
    <property type="match status" value="1"/>
</dbReference>
<dbReference type="Gene3D" id="3.30.54.20">
    <property type="match status" value="1"/>
</dbReference>
<dbReference type="Gene3D" id="3.40.50.800">
    <property type="entry name" value="Anticodon-binding domain"/>
    <property type="match status" value="1"/>
</dbReference>
<dbReference type="Gene3D" id="3.30.930.10">
    <property type="entry name" value="Bira Bifunctional Protein, Domain 2"/>
    <property type="match status" value="1"/>
</dbReference>
<dbReference type="Gene3D" id="3.30.980.10">
    <property type="entry name" value="Threonyl-trna Synthetase, Chain A, domain 2"/>
    <property type="match status" value="1"/>
</dbReference>
<dbReference type="HAMAP" id="MF_00184">
    <property type="entry name" value="Thr_tRNA_synth"/>
    <property type="match status" value="1"/>
</dbReference>
<dbReference type="InterPro" id="IPR002314">
    <property type="entry name" value="aa-tRNA-synt_IIb"/>
</dbReference>
<dbReference type="InterPro" id="IPR006195">
    <property type="entry name" value="aa-tRNA-synth_II"/>
</dbReference>
<dbReference type="InterPro" id="IPR045864">
    <property type="entry name" value="aa-tRNA-synth_II/BPL/LPL"/>
</dbReference>
<dbReference type="InterPro" id="IPR004154">
    <property type="entry name" value="Anticodon-bd"/>
</dbReference>
<dbReference type="InterPro" id="IPR036621">
    <property type="entry name" value="Anticodon-bd_dom_sf"/>
</dbReference>
<dbReference type="InterPro" id="IPR012675">
    <property type="entry name" value="Beta-grasp_dom_sf"/>
</dbReference>
<dbReference type="InterPro" id="IPR004095">
    <property type="entry name" value="TGS"/>
</dbReference>
<dbReference type="InterPro" id="IPR012676">
    <property type="entry name" value="TGS-like"/>
</dbReference>
<dbReference type="InterPro" id="IPR002320">
    <property type="entry name" value="Thr-tRNA-ligase_IIa"/>
</dbReference>
<dbReference type="InterPro" id="IPR018163">
    <property type="entry name" value="Thr/Ala-tRNA-synth_IIc_edit"/>
</dbReference>
<dbReference type="InterPro" id="IPR047246">
    <property type="entry name" value="ThrRS_anticodon"/>
</dbReference>
<dbReference type="InterPro" id="IPR033728">
    <property type="entry name" value="ThrRS_core"/>
</dbReference>
<dbReference type="InterPro" id="IPR012947">
    <property type="entry name" value="tRNA_SAD"/>
</dbReference>
<dbReference type="NCBIfam" id="TIGR00418">
    <property type="entry name" value="thrS"/>
    <property type="match status" value="1"/>
</dbReference>
<dbReference type="PANTHER" id="PTHR11451:SF56">
    <property type="entry name" value="THREONINE--TRNA LIGASE 1"/>
    <property type="match status" value="1"/>
</dbReference>
<dbReference type="PANTHER" id="PTHR11451">
    <property type="entry name" value="THREONINE-TRNA LIGASE"/>
    <property type="match status" value="1"/>
</dbReference>
<dbReference type="Pfam" id="PF03129">
    <property type="entry name" value="HGTP_anticodon"/>
    <property type="match status" value="1"/>
</dbReference>
<dbReference type="Pfam" id="PF02824">
    <property type="entry name" value="TGS"/>
    <property type="match status" value="1"/>
</dbReference>
<dbReference type="Pfam" id="PF00587">
    <property type="entry name" value="tRNA-synt_2b"/>
    <property type="match status" value="1"/>
</dbReference>
<dbReference type="Pfam" id="PF07973">
    <property type="entry name" value="tRNA_SAD"/>
    <property type="match status" value="1"/>
</dbReference>
<dbReference type="PRINTS" id="PR01047">
    <property type="entry name" value="TRNASYNTHTHR"/>
</dbReference>
<dbReference type="SMART" id="SM00863">
    <property type="entry name" value="tRNA_SAD"/>
    <property type="match status" value="1"/>
</dbReference>
<dbReference type="SUPFAM" id="SSF52954">
    <property type="entry name" value="Class II aaRS ABD-related"/>
    <property type="match status" value="1"/>
</dbReference>
<dbReference type="SUPFAM" id="SSF55681">
    <property type="entry name" value="Class II aaRS and biotin synthetases"/>
    <property type="match status" value="1"/>
</dbReference>
<dbReference type="SUPFAM" id="SSF81271">
    <property type="entry name" value="TGS-like"/>
    <property type="match status" value="1"/>
</dbReference>
<dbReference type="SUPFAM" id="SSF55186">
    <property type="entry name" value="ThrRS/AlaRS common domain"/>
    <property type="match status" value="1"/>
</dbReference>
<dbReference type="PROSITE" id="PS50862">
    <property type="entry name" value="AA_TRNA_LIGASE_II"/>
    <property type="match status" value="1"/>
</dbReference>
<dbReference type="PROSITE" id="PS51880">
    <property type="entry name" value="TGS"/>
    <property type="match status" value="1"/>
</dbReference>
<name>SYT_STRPC</name>
<gene>
    <name evidence="1" type="primary">thrS</name>
    <name type="ordered locus">MGAS9429_Spy0426</name>
</gene>
<feature type="chain" id="PRO_1000020528" description="Threonine--tRNA ligase">
    <location>
        <begin position="1"/>
        <end position="647"/>
    </location>
</feature>
<feature type="domain" description="TGS" evidence="2">
    <location>
        <begin position="1"/>
        <end position="61"/>
    </location>
</feature>
<feature type="region of interest" description="Catalytic" evidence="1">
    <location>
        <begin position="240"/>
        <end position="538"/>
    </location>
</feature>
<feature type="binding site" evidence="1">
    <location>
        <position position="334"/>
    </location>
    <ligand>
        <name>Zn(2+)</name>
        <dbReference type="ChEBI" id="CHEBI:29105"/>
    </ligand>
</feature>
<feature type="binding site" evidence="1">
    <location>
        <position position="385"/>
    </location>
    <ligand>
        <name>Zn(2+)</name>
        <dbReference type="ChEBI" id="CHEBI:29105"/>
    </ligand>
</feature>
<feature type="binding site" evidence="1">
    <location>
        <position position="515"/>
    </location>
    <ligand>
        <name>Zn(2+)</name>
        <dbReference type="ChEBI" id="CHEBI:29105"/>
    </ligand>
</feature>